<keyword id="KW-0067">ATP-binding</keyword>
<keyword id="KW-0315">Glutamine amidotransferase</keyword>
<keyword id="KW-0332">GMP biosynthesis</keyword>
<keyword id="KW-0436">Ligase</keyword>
<keyword id="KW-0547">Nucleotide-binding</keyword>
<keyword id="KW-0658">Purine biosynthesis</keyword>
<protein>
    <recommendedName>
        <fullName evidence="1">GMP synthase [glutamine-hydrolyzing]</fullName>
        <ecNumber evidence="1">6.3.5.2</ecNumber>
    </recommendedName>
    <alternativeName>
        <fullName evidence="1">GMP synthetase</fullName>
    </alternativeName>
    <alternativeName>
        <fullName evidence="1">Glutamine amidotransferase</fullName>
    </alternativeName>
</protein>
<accession>Q72IE5</accession>
<feature type="chain" id="PRO_0000140198" description="GMP synthase [glutamine-hydrolyzing]">
    <location>
        <begin position="1"/>
        <end position="503"/>
    </location>
</feature>
<feature type="domain" description="Glutamine amidotransferase type-1" evidence="1">
    <location>
        <begin position="1"/>
        <end position="189"/>
    </location>
</feature>
<feature type="domain" description="GMPS ATP-PPase" evidence="1">
    <location>
        <begin position="190"/>
        <end position="378"/>
    </location>
</feature>
<feature type="active site" description="Nucleophile" evidence="1">
    <location>
        <position position="78"/>
    </location>
</feature>
<feature type="active site" evidence="1">
    <location>
        <position position="164"/>
    </location>
</feature>
<feature type="active site" evidence="1">
    <location>
        <position position="166"/>
    </location>
</feature>
<feature type="binding site" evidence="1">
    <location>
        <begin position="217"/>
        <end position="223"/>
    </location>
    <ligand>
        <name>ATP</name>
        <dbReference type="ChEBI" id="CHEBI:30616"/>
    </ligand>
</feature>
<dbReference type="EC" id="6.3.5.2" evidence="1"/>
<dbReference type="EMBL" id="AE017221">
    <property type="protein sequence ID" value="AAS81529.1"/>
    <property type="molecule type" value="Genomic_DNA"/>
</dbReference>
<dbReference type="RefSeq" id="WP_011173598.1">
    <property type="nucleotide sequence ID" value="NC_005835.1"/>
</dbReference>
<dbReference type="SMR" id="Q72IE5"/>
<dbReference type="MEROPS" id="C26.A07"/>
<dbReference type="KEGG" id="tth:TT_C1187"/>
<dbReference type="eggNOG" id="COG0518">
    <property type="taxonomic scope" value="Bacteria"/>
</dbReference>
<dbReference type="eggNOG" id="COG0519">
    <property type="taxonomic scope" value="Bacteria"/>
</dbReference>
<dbReference type="HOGENOM" id="CLU_014340_0_5_0"/>
<dbReference type="OrthoDB" id="9802219at2"/>
<dbReference type="UniPathway" id="UPA00189">
    <property type="reaction ID" value="UER00296"/>
</dbReference>
<dbReference type="Proteomes" id="UP000000592">
    <property type="component" value="Chromosome"/>
</dbReference>
<dbReference type="GO" id="GO:0005829">
    <property type="term" value="C:cytosol"/>
    <property type="evidence" value="ECO:0007669"/>
    <property type="project" value="TreeGrafter"/>
</dbReference>
<dbReference type="GO" id="GO:0005524">
    <property type="term" value="F:ATP binding"/>
    <property type="evidence" value="ECO:0007669"/>
    <property type="project" value="UniProtKB-UniRule"/>
</dbReference>
<dbReference type="GO" id="GO:0003921">
    <property type="term" value="F:GMP synthase activity"/>
    <property type="evidence" value="ECO:0007669"/>
    <property type="project" value="InterPro"/>
</dbReference>
<dbReference type="CDD" id="cd01742">
    <property type="entry name" value="GATase1_GMP_Synthase"/>
    <property type="match status" value="1"/>
</dbReference>
<dbReference type="CDD" id="cd01997">
    <property type="entry name" value="GMP_synthase_C"/>
    <property type="match status" value="1"/>
</dbReference>
<dbReference type="FunFam" id="3.30.300.10:FF:000002">
    <property type="entry name" value="GMP synthase [glutamine-hydrolyzing]"/>
    <property type="match status" value="1"/>
</dbReference>
<dbReference type="FunFam" id="3.40.50.880:FF:000001">
    <property type="entry name" value="GMP synthase [glutamine-hydrolyzing]"/>
    <property type="match status" value="1"/>
</dbReference>
<dbReference type="Gene3D" id="3.30.300.10">
    <property type="match status" value="1"/>
</dbReference>
<dbReference type="Gene3D" id="3.40.50.880">
    <property type="match status" value="1"/>
</dbReference>
<dbReference type="Gene3D" id="3.40.50.620">
    <property type="entry name" value="HUPs"/>
    <property type="match status" value="1"/>
</dbReference>
<dbReference type="HAMAP" id="MF_00344">
    <property type="entry name" value="GMP_synthase"/>
    <property type="match status" value="1"/>
</dbReference>
<dbReference type="InterPro" id="IPR029062">
    <property type="entry name" value="Class_I_gatase-like"/>
</dbReference>
<dbReference type="InterPro" id="IPR017926">
    <property type="entry name" value="GATASE"/>
</dbReference>
<dbReference type="InterPro" id="IPR001674">
    <property type="entry name" value="GMP_synth_C"/>
</dbReference>
<dbReference type="InterPro" id="IPR004739">
    <property type="entry name" value="GMP_synth_GATase"/>
</dbReference>
<dbReference type="InterPro" id="IPR022955">
    <property type="entry name" value="GMP_synthase"/>
</dbReference>
<dbReference type="InterPro" id="IPR025777">
    <property type="entry name" value="GMPS_ATP_PPase_dom"/>
</dbReference>
<dbReference type="InterPro" id="IPR014729">
    <property type="entry name" value="Rossmann-like_a/b/a_fold"/>
</dbReference>
<dbReference type="NCBIfam" id="TIGR00884">
    <property type="entry name" value="guaA_Cterm"/>
    <property type="match status" value="1"/>
</dbReference>
<dbReference type="NCBIfam" id="TIGR00888">
    <property type="entry name" value="guaA_Nterm"/>
    <property type="match status" value="1"/>
</dbReference>
<dbReference type="NCBIfam" id="NF000848">
    <property type="entry name" value="PRK00074.1"/>
    <property type="match status" value="1"/>
</dbReference>
<dbReference type="PANTHER" id="PTHR11922:SF2">
    <property type="entry name" value="GMP SYNTHASE [GLUTAMINE-HYDROLYZING]"/>
    <property type="match status" value="1"/>
</dbReference>
<dbReference type="PANTHER" id="PTHR11922">
    <property type="entry name" value="GMP SYNTHASE-RELATED"/>
    <property type="match status" value="1"/>
</dbReference>
<dbReference type="Pfam" id="PF00117">
    <property type="entry name" value="GATase"/>
    <property type="match status" value="1"/>
</dbReference>
<dbReference type="Pfam" id="PF00958">
    <property type="entry name" value="GMP_synt_C"/>
    <property type="match status" value="1"/>
</dbReference>
<dbReference type="PRINTS" id="PR00097">
    <property type="entry name" value="ANTSNTHASEII"/>
</dbReference>
<dbReference type="PRINTS" id="PR00096">
    <property type="entry name" value="GATASE"/>
</dbReference>
<dbReference type="SUPFAM" id="SSF52402">
    <property type="entry name" value="Adenine nucleotide alpha hydrolases-like"/>
    <property type="match status" value="1"/>
</dbReference>
<dbReference type="SUPFAM" id="SSF52317">
    <property type="entry name" value="Class I glutamine amidotransferase-like"/>
    <property type="match status" value="1"/>
</dbReference>
<dbReference type="SUPFAM" id="SSF54810">
    <property type="entry name" value="GMP synthetase C-terminal dimerisation domain"/>
    <property type="match status" value="1"/>
</dbReference>
<dbReference type="PROSITE" id="PS51273">
    <property type="entry name" value="GATASE_TYPE_1"/>
    <property type="match status" value="1"/>
</dbReference>
<dbReference type="PROSITE" id="PS51553">
    <property type="entry name" value="GMPS_ATP_PPASE"/>
    <property type="match status" value="1"/>
</dbReference>
<gene>
    <name evidence="1" type="primary">guaA</name>
    <name type="ordered locus">TT_C1187</name>
</gene>
<name>GUAA_THET2</name>
<evidence type="ECO:0000255" key="1">
    <source>
        <dbReference type="HAMAP-Rule" id="MF_00344"/>
    </source>
</evidence>
<comment type="function">
    <text evidence="1">Catalyzes the synthesis of GMP from XMP.</text>
</comment>
<comment type="catalytic activity">
    <reaction evidence="1">
        <text>XMP + L-glutamine + ATP + H2O = GMP + L-glutamate + AMP + diphosphate + 2 H(+)</text>
        <dbReference type="Rhea" id="RHEA:11680"/>
        <dbReference type="ChEBI" id="CHEBI:15377"/>
        <dbReference type="ChEBI" id="CHEBI:15378"/>
        <dbReference type="ChEBI" id="CHEBI:29985"/>
        <dbReference type="ChEBI" id="CHEBI:30616"/>
        <dbReference type="ChEBI" id="CHEBI:33019"/>
        <dbReference type="ChEBI" id="CHEBI:57464"/>
        <dbReference type="ChEBI" id="CHEBI:58115"/>
        <dbReference type="ChEBI" id="CHEBI:58359"/>
        <dbReference type="ChEBI" id="CHEBI:456215"/>
        <dbReference type="EC" id="6.3.5.2"/>
    </reaction>
</comment>
<comment type="pathway">
    <text evidence="1">Purine metabolism; GMP biosynthesis; GMP from XMP (L-Gln route): step 1/1.</text>
</comment>
<comment type="subunit">
    <text evidence="1">Homodimer.</text>
</comment>
<sequence length="503" mass="55789">MVLVLDFGSQYTRLIARRLRELRAFSLILPGDAPLEEVLKHRPQALILSGGPRSVFDPDAPRPDPRLFSSGLPLLGICYGMQLLAQELGGRVERAGRAEYGKALLTRHEGPLFRGLEGEVQVWMSHQDAVTAPPPGWRVVAETEENPVAAIASPDGRAYGVQFHPEVAHTPKGMQILENFLELAGAKRDWTPEHVLEELLREVRERAGKDRVLLAVSGGVDSSTLALLLAKAGVDHLAVFVDHGLLRLGEREEVEGALRALGVNLLVVDAKERFLKALKGVEDPEEKRKIIGREFVAAFSQVARERGPFRFLAQGTLYPDVIESAGGHGAAKIKSHHNVGGLPEDLEFELLEPFRLLFKDEVRELALLLGLPDTLRLRHPFPGPGLAVRVLGEVTEERLEILRRADDIFTSLLREWGLYEKVAQALAVLTPVRSVGVAGDERKYGYVLALRAVTTEDFMTADWARLPLEFLDEAARRITRRVPEIGRVVYDLTSKPPATIEWE</sequence>
<proteinExistence type="inferred from homology"/>
<organism>
    <name type="scientific">Thermus thermophilus (strain ATCC BAA-163 / DSM 7039 / HB27)</name>
    <dbReference type="NCBI Taxonomy" id="262724"/>
    <lineage>
        <taxon>Bacteria</taxon>
        <taxon>Thermotogati</taxon>
        <taxon>Deinococcota</taxon>
        <taxon>Deinococci</taxon>
        <taxon>Thermales</taxon>
        <taxon>Thermaceae</taxon>
        <taxon>Thermus</taxon>
    </lineage>
</organism>
<reference key="1">
    <citation type="journal article" date="2004" name="Nat. Biotechnol.">
        <title>The genome sequence of the extreme thermophile Thermus thermophilus.</title>
        <authorList>
            <person name="Henne A."/>
            <person name="Brueggemann H."/>
            <person name="Raasch C."/>
            <person name="Wiezer A."/>
            <person name="Hartsch T."/>
            <person name="Liesegang H."/>
            <person name="Johann A."/>
            <person name="Lienard T."/>
            <person name="Gohl O."/>
            <person name="Martinez-Arias R."/>
            <person name="Jacobi C."/>
            <person name="Starkuviene V."/>
            <person name="Schlenczeck S."/>
            <person name="Dencker S."/>
            <person name="Huber R."/>
            <person name="Klenk H.-P."/>
            <person name="Kramer W."/>
            <person name="Merkl R."/>
            <person name="Gottschalk G."/>
            <person name="Fritz H.-J."/>
        </authorList>
    </citation>
    <scope>NUCLEOTIDE SEQUENCE [LARGE SCALE GENOMIC DNA]</scope>
    <source>
        <strain>ATCC BAA-163 / DSM 7039 / HB27</strain>
    </source>
</reference>